<accession>A5VNQ1</accession>
<sequence length="364" mass="39272">MSGLFETLGRRALFTFDAEQAHGLSITGLKTGIVTCRTPEDPALSVKVAGLKFPNPLGMAAGYDKNAEVPDALLKLGFGFAEVGTLTPRPQSGNPRPRIFRLVDDKAVINRLGFNNEGHEAAFKRLSRRAGKSGIVGVNIGANKDAEDRIADYVAGIRRFYQLARYFTVNISSPNTPGLRNLQAREALHELLSRVLEARDEEGNMCTLKRPVFLKIAPDLTDEELDDIAAEADAQKLDGIIVSNTTLSRSGLKNPENSNETGGLSGAPLFERSTVVLARMRERVGPDMPLIGVGGIDSAETALAKIKAGADLVQLYTGLIYRGPGLPGEILRGLSTAIKHEGVSSIAELRDRDTKEWAARKLIS</sequence>
<organism>
    <name type="scientific">Brucella ovis (strain ATCC 25840 / 63/290 / NCTC 10512)</name>
    <dbReference type="NCBI Taxonomy" id="444178"/>
    <lineage>
        <taxon>Bacteria</taxon>
        <taxon>Pseudomonadati</taxon>
        <taxon>Pseudomonadota</taxon>
        <taxon>Alphaproteobacteria</taxon>
        <taxon>Hyphomicrobiales</taxon>
        <taxon>Brucellaceae</taxon>
        <taxon>Brucella/Ochrobactrum group</taxon>
        <taxon>Brucella</taxon>
    </lineage>
</organism>
<protein>
    <recommendedName>
        <fullName evidence="1">Dihydroorotate dehydrogenase (quinone)</fullName>
        <ecNumber evidence="1">1.3.5.2</ecNumber>
    </recommendedName>
    <alternativeName>
        <fullName evidence="1">DHOdehase</fullName>
        <shortName evidence="1">DHOD</shortName>
        <shortName evidence="1">DHODase</shortName>
    </alternativeName>
    <alternativeName>
        <fullName evidence="1">Dihydroorotate oxidase</fullName>
    </alternativeName>
</protein>
<evidence type="ECO:0000255" key="1">
    <source>
        <dbReference type="HAMAP-Rule" id="MF_00225"/>
    </source>
</evidence>
<comment type="function">
    <text evidence="1">Catalyzes the conversion of dihydroorotate to orotate with quinone as electron acceptor.</text>
</comment>
<comment type="catalytic activity">
    <reaction evidence="1">
        <text>(S)-dihydroorotate + a quinone = orotate + a quinol</text>
        <dbReference type="Rhea" id="RHEA:30187"/>
        <dbReference type="ChEBI" id="CHEBI:24646"/>
        <dbReference type="ChEBI" id="CHEBI:30839"/>
        <dbReference type="ChEBI" id="CHEBI:30864"/>
        <dbReference type="ChEBI" id="CHEBI:132124"/>
        <dbReference type="EC" id="1.3.5.2"/>
    </reaction>
</comment>
<comment type="cofactor">
    <cofactor evidence="1">
        <name>FMN</name>
        <dbReference type="ChEBI" id="CHEBI:58210"/>
    </cofactor>
    <text evidence="1">Binds 1 FMN per subunit.</text>
</comment>
<comment type="pathway">
    <text evidence="1">Pyrimidine metabolism; UMP biosynthesis via de novo pathway; orotate from (S)-dihydroorotate (quinone route): step 1/1.</text>
</comment>
<comment type="subunit">
    <text evidence="1">Monomer.</text>
</comment>
<comment type="subcellular location">
    <subcellularLocation>
        <location evidence="1">Cell membrane</location>
        <topology evidence="1">Peripheral membrane protein</topology>
    </subcellularLocation>
</comment>
<comment type="similarity">
    <text evidence="1">Belongs to the dihydroorotate dehydrogenase family. Type 2 subfamily.</text>
</comment>
<proteinExistence type="inferred from homology"/>
<keyword id="KW-1003">Cell membrane</keyword>
<keyword id="KW-0285">Flavoprotein</keyword>
<keyword id="KW-0288">FMN</keyword>
<keyword id="KW-0472">Membrane</keyword>
<keyword id="KW-0560">Oxidoreductase</keyword>
<keyword id="KW-0665">Pyrimidine biosynthesis</keyword>
<dbReference type="EC" id="1.3.5.2" evidence="1"/>
<dbReference type="EMBL" id="CP000708">
    <property type="protein sequence ID" value="ABQ61413.1"/>
    <property type="molecule type" value="Genomic_DNA"/>
</dbReference>
<dbReference type="RefSeq" id="WP_004687981.1">
    <property type="nucleotide sequence ID" value="NC_009505.1"/>
</dbReference>
<dbReference type="SMR" id="A5VNQ1"/>
<dbReference type="KEGG" id="bov:BOV_0325"/>
<dbReference type="HOGENOM" id="CLU_013640_2_1_5"/>
<dbReference type="PhylomeDB" id="A5VNQ1"/>
<dbReference type="UniPathway" id="UPA00070">
    <property type="reaction ID" value="UER00946"/>
</dbReference>
<dbReference type="PRO" id="PR:A5VNQ1"/>
<dbReference type="Proteomes" id="UP000006383">
    <property type="component" value="Chromosome I"/>
</dbReference>
<dbReference type="GO" id="GO:0005737">
    <property type="term" value="C:cytoplasm"/>
    <property type="evidence" value="ECO:0007669"/>
    <property type="project" value="InterPro"/>
</dbReference>
<dbReference type="GO" id="GO:0005886">
    <property type="term" value="C:plasma membrane"/>
    <property type="evidence" value="ECO:0007669"/>
    <property type="project" value="UniProtKB-SubCell"/>
</dbReference>
<dbReference type="GO" id="GO:0106430">
    <property type="term" value="F:dihydroorotate dehydrogenase (quinone) activity"/>
    <property type="evidence" value="ECO:0007669"/>
    <property type="project" value="UniProtKB-EC"/>
</dbReference>
<dbReference type="GO" id="GO:0006207">
    <property type="term" value="P:'de novo' pyrimidine nucleobase biosynthetic process"/>
    <property type="evidence" value="ECO:0007669"/>
    <property type="project" value="InterPro"/>
</dbReference>
<dbReference type="GO" id="GO:0044205">
    <property type="term" value="P:'de novo' UMP biosynthetic process"/>
    <property type="evidence" value="ECO:0007669"/>
    <property type="project" value="UniProtKB-UniRule"/>
</dbReference>
<dbReference type="CDD" id="cd04738">
    <property type="entry name" value="DHOD_2_like"/>
    <property type="match status" value="1"/>
</dbReference>
<dbReference type="Gene3D" id="3.20.20.70">
    <property type="entry name" value="Aldolase class I"/>
    <property type="match status" value="1"/>
</dbReference>
<dbReference type="HAMAP" id="MF_00225">
    <property type="entry name" value="DHO_dh_type2"/>
    <property type="match status" value="1"/>
</dbReference>
<dbReference type="InterPro" id="IPR013785">
    <property type="entry name" value="Aldolase_TIM"/>
</dbReference>
<dbReference type="InterPro" id="IPR050074">
    <property type="entry name" value="DHO_dehydrogenase"/>
</dbReference>
<dbReference type="InterPro" id="IPR005719">
    <property type="entry name" value="Dihydroorotate_DH_2"/>
</dbReference>
<dbReference type="InterPro" id="IPR005720">
    <property type="entry name" value="Dihydroorotate_DH_cat"/>
</dbReference>
<dbReference type="InterPro" id="IPR001295">
    <property type="entry name" value="Dihydroorotate_DH_CS"/>
</dbReference>
<dbReference type="NCBIfam" id="NF003645">
    <property type="entry name" value="PRK05286.1-2"/>
    <property type="match status" value="1"/>
</dbReference>
<dbReference type="NCBIfam" id="NF003652">
    <property type="entry name" value="PRK05286.2-5"/>
    <property type="match status" value="1"/>
</dbReference>
<dbReference type="NCBIfam" id="TIGR01036">
    <property type="entry name" value="pyrD_sub2"/>
    <property type="match status" value="1"/>
</dbReference>
<dbReference type="PANTHER" id="PTHR48109:SF4">
    <property type="entry name" value="DIHYDROOROTATE DEHYDROGENASE (QUINONE), MITOCHONDRIAL"/>
    <property type="match status" value="1"/>
</dbReference>
<dbReference type="PANTHER" id="PTHR48109">
    <property type="entry name" value="DIHYDROOROTATE DEHYDROGENASE (QUINONE), MITOCHONDRIAL-RELATED"/>
    <property type="match status" value="1"/>
</dbReference>
<dbReference type="Pfam" id="PF01180">
    <property type="entry name" value="DHO_dh"/>
    <property type="match status" value="1"/>
</dbReference>
<dbReference type="SUPFAM" id="SSF51395">
    <property type="entry name" value="FMN-linked oxidoreductases"/>
    <property type="match status" value="1"/>
</dbReference>
<dbReference type="PROSITE" id="PS00911">
    <property type="entry name" value="DHODEHASE_1"/>
    <property type="match status" value="1"/>
</dbReference>
<dbReference type="PROSITE" id="PS00912">
    <property type="entry name" value="DHODEHASE_2"/>
    <property type="match status" value="1"/>
</dbReference>
<feature type="chain" id="PRO_1000024157" description="Dihydroorotate dehydrogenase (quinone)">
    <location>
        <begin position="1"/>
        <end position="364"/>
    </location>
</feature>
<feature type="active site" description="Nucleophile" evidence="1">
    <location>
        <position position="173"/>
    </location>
</feature>
<feature type="binding site" evidence="1">
    <location>
        <begin position="61"/>
        <end position="65"/>
    </location>
    <ligand>
        <name>FMN</name>
        <dbReference type="ChEBI" id="CHEBI:58210"/>
    </ligand>
</feature>
<feature type="binding site" evidence="1">
    <location>
        <position position="65"/>
    </location>
    <ligand>
        <name>substrate</name>
    </ligand>
</feature>
<feature type="binding site" evidence="1">
    <location>
        <position position="85"/>
    </location>
    <ligand>
        <name>FMN</name>
        <dbReference type="ChEBI" id="CHEBI:58210"/>
    </ligand>
</feature>
<feature type="binding site" evidence="1">
    <location>
        <begin position="110"/>
        <end position="114"/>
    </location>
    <ligand>
        <name>substrate</name>
    </ligand>
</feature>
<feature type="binding site" evidence="1">
    <location>
        <position position="139"/>
    </location>
    <ligand>
        <name>FMN</name>
        <dbReference type="ChEBI" id="CHEBI:58210"/>
    </ligand>
</feature>
<feature type="binding site" evidence="1">
    <location>
        <position position="170"/>
    </location>
    <ligand>
        <name>FMN</name>
        <dbReference type="ChEBI" id="CHEBI:58210"/>
    </ligand>
</feature>
<feature type="binding site" evidence="1">
    <location>
        <position position="170"/>
    </location>
    <ligand>
        <name>substrate</name>
    </ligand>
</feature>
<feature type="binding site" evidence="1">
    <location>
        <position position="175"/>
    </location>
    <ligand>
        <name>substrate</name>
    </ligand>
</feature>
<feature type="binding site" evidence="1">
    <location>
        <position position="215"/>
    </location>
    <ligand>
        <name>FMN</name>
        <dbReference type="ChEBI" id="CHEBI:58210"/>
    </ligand>
</feature>
<feature type="binding site" evidence="1">
    <location>
        <position position="243"/>
    </location>
    <ligand>
        <name>FMN</name>
        <dbReference type="ChEBI" id="CHEBI:58210"/>
    </ligand>
</feature>
<feature type="binding site" evidence="1">
    <location>
        <begin position="244"/>
        <end position="245"/>
    </location>
    <ligand>
        <name>substrate</name>
    </ligand>
</feature>
<feature type="binding site" evidence="1">
    <location>
        <position position="266"/>
    </location>
    <ligand>
        <name>FMN</name>
        <dbReference type="ChEBI" id="CHEBI:58210"/>
    </ligand>
</feature>
<feature type="binding site" evidence="1">
    <location>
        <position position="295"/>
    </location>
    <ligand>
        <name>FMN</name>
        <dbReference type="ChEBI" id="CHEBI:58210"/>
    </ligand>
</feature>
<feature type="binding site" evidence="1">
    <location>
        <begin position="316"/>
        <end position="317"/>
    </location>
    <ligand>
        <name>FMN</name>
        <dbReference type="ChEBI" id="CHEBI:58210"/>
    </ligand>
</feature>
<name>PYRD_BRUO2</name>
<reference key="1">
    <citation type="journal article" date="2009" name="PLoS ONE">
        <title>Genome degradation in Brucella ovis corresponds with narrowing of its host range and tissue tropism.</title>
        <authorList>
            <person name="Tsolis R.M."/>
            <person name="Seshadri R."/>
            <person name="Santos R.L."/>
            <person name="Sangari F.J."/>
            <person name="Lobo J.M."/>
            <person name="de Jong M.F."/>
            <person name="Ren Q."/>
            <person name="Myers G."/>
            <person name="Brinkac L.M."/>
            <person name="Nelson W.C."/>
            <person name="Deboy R.T."/>
            <person name="Angiuoli S."/>
            <person name="Khouri H."/>
            <person name="Dimitrov G."/>
            <person name="Robinson J.R."/>
            <person name="Mulligan S."/>
            <person name="Walker R.L."/>
            <person name="Elzer P.E."/>
            <person name="Hassan K.A."/>
            <person name="Paulsen I.T."/>
        </authorList>
    </citation>
    <scope>NUCLEOTIDE SEQUENCE [LARGE SCALE GENOMIC DNA]</scope>
    <source>
        <strain>ATCC 25840 / 63/290 / NCTC 10512</strain>
    </source>
</reference>
<gene>
    <name evidence="1" type="primary">pyrD</name>
    <name type="ordered locus">BOV_0325</name>
</gene>